<gene>
    <name type="primary">Myc</name>
</gene>
<accession>P01108</accession>
<accession>A0A087WSQ0</accession>
<accession>B2RSN1</accession>
<accession>F6PX41</accession>
<accession>F8WID3</accession>
<accession>P70247</accession>
<accession>Q3UM70</accession>
<accession>Q61422</accession>
<keyword id="KW-0007">Acetylation</keyword>
<keyword id="KW-0010">Activator</keyword>
<keyword id="KW-0024">Alternative initiation</keyword>
<keyword id="KW-0158">Chromosome</keyword>
<keyword id="KW-0963">Cytoplasm</keyword>
<keyword id="KW-0238">DNA-binding</keyword>
<keyword id="KW-0325">Glycoprotein</keyword>
<keyword id="KW-1017">Isopeptide bond</keyword>
<keyword id="KW-0539">Nucleus</keyword>
<keyword id="KW-0597">Phosphoprotein</keyword>
<keyword id="KW-0656">Proto-oncogene</keyword>
<keyword id="KW-1185">Reference proteome</keyword>
<keyword id="KW-0804">Transcription</keyword>
<keyword id="KW-0805">Transcription regulation</keyword>
<keyword id="KW-0832">Ubl conjugation</keyword>
<protein>
    <recommendedName>
        <fullName>Myc proto-oncogene protein</fullName>
    </recommendedName>
    <alternativeName>
        <fullName>Proto-oncogene c-Myc</fullName>
    </alternativeName>
    <alternativeName>
        <fullName>Transcription factor p64</fullName>
    </alternativeName>
</protein>
<feature type="chain" id="PRO_0000127296" description="Myc proto-oncogene protein">
    <location>
        <begin position="1"/>
        <end position="454"/>
    </location>
</feature>
<feature type="domain" description="bHLH" evidence="3">
    <location>
        <begin position="369"/>
        <end position="421"/>
    </location>
</feature>
<feature type="region of interest" description="Disordered" evidence="4">
    <location>
        <begin position="220"/>
        <end position="380"/>
    </location>
</feature>
<feature type="region of interest" description="Leucine-zipper">
    <location>
        <begin position="428"/>
        <end position="449"/>
    </location>
</feature>
<feature type="short sequence motif" description="9aaTAD" evidence="2">
    <location>
        <begin position="116"/>
        <end position="124"/>
    </location>
</feature>
<feature type="short sequence motif" description="UBR5-degron" evidence="2">
    <location>
        <begin position="370"/>
        <end position="379"/>
    </location>
</feature>
<feature type="compositionally biased region" description="Low complexity" evidence="4">
    <location>
        <begin position="220"/>
        <end position="252"/>
    </location>
</feature>
<feature type="compositionally biased region" description="Acidic residues" evidence="4">
    <location>
        <begin position="266"/>
        <end position="278"/>
    </location>
</feature>
<feature type="compositionally biased region" description="Basic and acidic residues" evidence="4">
    <location>
        <begin position="281"/>
        <end position="293"/>
    </location>
</feature>
<feature type="compositionally biased region" description="Basic and acidic residues" evidence="4">
    <location>
        <begin position="330"/>
        <end position="346"/>
    </location>
</feature>
<feature type="compositionally biased region" description="Polar residues" evidence="4">
    <location>
        <begin position="350"/>
        <end position="362"/>
    </location>
</feature>
<feature type="modified residue" description="Phosphothreonine" evidence="2">
    <location>
        <position position="23"/>
    </location>
</feature>
<feature type="modified residue" description="Phosphothreonine; by GSK3; alternate" evidence="2">
    <location>
        <position position="73"/>
    </location>
</feature>
<feature type="modified residue" description="Phosphoserine; by DYRK2, GSK3 and CDK2" evidence="2">
    <location>
        <position position="77"/>
    </location>
</feature>
<feature type="modified residue" description="Phosphoserine" evidence="2">
    <location>
        <position position="86"/>
    </location>
</feature>
<feature type="modified residue" description="Phosphoserine" evidence="2">
    <location>
        <position position="97"/>
    </location>
</feature>
<feature type="modified residue" description="N6-acetyllysine; by PCAF; alternate" evidence="2">
    <location>
        <position position="159"/>
    </location>
</feature>
<feature type="modified residue" description="N6-acetyllysine; alternate" evidence="16">
    <location>
        <position position="164"/>
    </location>
</feature>
<feature type="modified residue" description="Phosphoserine" evidence="2">
    <location>
        <position position="167"/>
    </location>
</feature>
<feature type="modified residue" description="N6-acetyllysine; by PCAF" evidence="2">
    <location>
        <position position="173"/>
    </location>
</feature>
<feature type="modified residue" description="Phosphoserine" evidence="2">
    <location>
        <position position="175"/>
    </location>
</feature>
<feature type="modified residue" description="Phosphoserine" evidence="2">
    <location>
        <position position="177"/>
    </location>
</feature>
<feature type="modified residue" description="N6-acetyllysine; by PCAF" evidence="2">
    <location>
        <position position="290"/>
    </location>
</feature>
<feature type="modified residue" description="Phosphoserine" evidence="2">
    <location>
        <position position="308"/>
    </location>
</feature>
<feature type="modified residue" description="Phosphoserine" evidence="2">
    <location>
        <position position="329"/>
    </location>
</feature>
<feature type="modified residue" description="Phosphothreonine" evidence="2">
    <location>
        <position position="330"/>
    </location>
</feature>
<feature type="modified residue" description="N6-acetyllysine; by PCAF" evidence="2">
    <location>
        <position position="332"/>
    </location>
</feature>
<feature type="modified residue" description="N6-acetyllysine; by PCAF" evidence="2">
    <location>
        <position position="338"/>
    </location>
</feature>
<feature type="modified residue" description="Phosphoserine; by PIM2; in vitro" evidence="8">
    <location>
        <position position="344"/>
    </location>
</feature>
<feature type="modified residue" description="Phosphoserine" evidence="2">
    <location>
        <position position="359"/>
    </location>
</feature>
<feature type="modified residue" description="Phosphoserine" evidence="2">
    <location>
        <position position="362"/>
    </location>
</feature>
<feature type="modified residue" description="Phosphoserine" evidence="2">
    <location>
        <position position="363"/>
    </location>
</feature>
<feature type="modified residue" description="N6-acetyllysine; by PCAF" evidence="2">
    <location>
        <position position="386"/>
    </location>
</feature>
<feature type="glycosylation site" description="O-linked (GlcNAc) threonine; alternate" evidence="1">
    <location>
        <position position="73"/>
    </location>
</feature>
<feature type="cross-link" description="Glycyl lysine isopeptide (Lys-Gly) (interchain with G-Cter in SUMO2)" evidence="2">
    <location>
        <position position="67"/>
    </location>
</feature>
<feature type="cross-link" description="Glycyl lysine isopeptide (Lys-Gly) (interchain with G-Cter in SUMO2); alternate" evidence="2">
    <location>
        <position position="159"/>
    </location>
</feature>
<feature type="cross-link" description="Glycyl lysine isopeptide (Lys-Gly) (interchain with G-Cter in SUMO2); alternate" evidence="2">
    <location>
        <position position="164"/>
    </location>
</feature>
<feature type="cross-link" description="Glycyl lysine isopeptide (Lys-Gly) (interchain with G-Cter in SUMO2)" evidence="2">
    <location>
        <position position="313"/>
    </location>
</feature>
<feature type="splice variant" id="VSP_061781" description="In isoform 1.">
    <location>
        <begin position="1"/>
        <end position="15"/>
    </location>
</feature>
<feature type="splice variant" id="VSP_061782" description="In isoform 3.">
    <location>
        <position position="11"/>
    </location>
</feature>
<feature type="mutagenesis site" description="Does not affect interaction with TRIM6." evidence="9">
    <original>T</original>
    <variation>A</variation>
    <location>
        <position position="73"/>
    </location>
</feature>
<feature type="mutagenesis site" description="Does not affect interaction with TRIM6." evidence="9">
    <original>S</original>
    <variation>A</variation>
    <location>
        <position position="77"/>
    </location>
</feature>
<feature type="mutagenesis site" description="Reduces phosphorylation by PIM2 by 60%, and decreases the transcriptional activity of MYC." evidence="8">
    <original>S</original>
    <variation>A</variation>
    <location>
        <position position="344"/>
    </location>
</feature>
<feature type="sequence conflict" description="In Ref. 6; K00683." evidence="14" ref="6">
    <original>E</original>
    <variation>D</variation>
    <location>
        <position position="54"/>
    </location>
</feature>
<feature type="sequence conflict" description="In Ref. 1; AAB59728." evidence="14" ref="1">
    <original>E</original>
    <variation>Q</variation>
    <location>
        <position position="116"/>
    </location>
</feature>
<feature type="sequence conflict" description="In Ref. 1; AAB59728." evidence="14" ref="1">
    <original>S</original>
    <variation>F</variation>
    <location>
        <position position="299"/>
    </location>
</feature>
<comment type="function">
    <text evidence="2 11">Transcription factor that binds DNA in a non-specific manner, yet also specifically recognizes the core sequence 5'-CAC[GA]TG-3'. Activates the transcription of growth-related genes. Binds to the VEGFA promoter, promoting VEGFA production and subsequent sprouting angiogenesis. Regulator of somatic reprogramming, controls self-renewal of embryonic stem cells. Functions with TAF6L to activate target gene expression through RNA polymerase II pause release (PubMed:31005419). Positively regulates transcription of HNRNPA1, HNRNPA2 and PTBP1 which in turn regulate splicing of pyruvate kinase PKM by binding repressively to sequences flanking PKM exon 9, inhibiting exon 9 inclusion and resulting in exon 10 inclusion and production of the PKM M2 isoform (By similarity).</text>
</comment>
<comment type="subunit">
    <text evidence="2 5 8 9">Efficient DNA binding requires dimerization with another bHLH protein. Binds DNA as a heterodimer with MAX (By similarity). Interacts with TAF1C and SPAG9. Interacts with PARP10. Interacts with KDM5A and KDM5B. Interacts (when phosphorylated at Thr-73 and Ser-77) with FBXW7. Interacts with PIM2 (PubMed:18438430). Interacts with RIOX1. The heterodimer MYC:MAX interacts with ABI1; the interaction may enhance MYC:MAX transcriptional activity (By similarity). Interacts with TRIM6 (PubMed:22328504). Interacts with NPM1; the binary complex is recruited to the promoter of MYC target genes and enhances their transcription (By similarity). Interacts with CIP2A; leading to the stabilization of MYC (By similarity). Interacts with NUP205 (By similarity). Interacts with HEATR1; the interaction is required for localization of MYC to the nucleolus (By similarity).</text>
</comment>
<comment type="interaction">
    <interactant intactId="EBI-1183114">
        <id>P01108</id>
    </interactant>
    <interactant intactId="EBI-1183003">
        <id>P28574</id>
        <label>Max</label>
    </interactant>
    <organismsDiffer>false</organismsDiffer>
    <experiments>7</experiments>
</comment>
<comment type="interaction">
    <interactant intactId="EBI-1183114">
        <id>P01108</id>
    </interactant>
    <interactant intactId="EBI-773837">
        <id>Q8CH72</id>
        <label>Trim32</label>
    </interactant>
    <organismsDiffer>false</organismsDiffer>
    <experiments>2</experiments>
</comment>
<comment type="subcellular location">
    <subcellularLocation>
        <location evidence="2">Nucleus</location>
        <location evidence="2">Nucleoplasm</location>
    </subcellularLocation>
    <subcellularLocation>
        <location evidence="2">Nucleus</location>
        <location evidence="2">Nucleolus</location>
    </subcellularLocation>
    <subcellularLocation>
        <location evidence="2">Nucleus</location>
    </subcellularLocation>
    <subcellularLocation>
        <location evidence="2">Cytoplasm</location>
    </subcellularLocation>
    <subcellularLocation>
        <location evidence="2">Chromosome</location>
    </subcellularLocation>
    <text evidence="2">Association with chromatin is reduced by hyperphosphorylation. Localization to the nucleolus is dependent on HEATR1.</text>
</comment>
<comment type="alternative products">
    <event type="alternative initiation"/>
    <isoform>
        <id>P01108-1</id>
        <name>2</name>
        <name evidence="13">c-myc 1</name>
        <sequence type="displayed"/>
    </isoform>
    <isoform>
        <id>P01108-2</id>
        <name>1</name>
        <name evidence="13">c-myc 2</name>
        <sequence type="described" ref="VSP_061781"/>
    </isoform>
    <isoform>
        <id>P01108-3</id>
        <name>3</name>
        <sequence type="described" ref="VSP_061782"/>
    </isoform>
</comment>
<comment type="tissue specificity">
    <text evidence="10">Expressed in the intestinal epithelium (at protein level).</text>
</comment>
<comment type="developmental stage">
    <text evidence="12">Expressed in the proliferating cells of the developing CNS and the epidermis. At 10.5, 11.5 and 12.5 dpc, expressed in the spinal cord, within a subset of cells in the proliferative ventricular zone, as well as in the differentiating cells at the ventral portion of the intermediate zone. Also detected in the roof plate and in the neural crest. At 14.5 dpc, found in regions containing differentiating postmitotic neurons. In the developing epidermis at 14.5 dpc, found in the dorsal lateral epidermis. At 17 dpc, expression is confined primarily to the proliferative malphigian layer of the epidermis and to the dermal papilla and primary germ cells in the dermis.</text>
</comment>
<comment type="induction">
    <molecule>Isoform 2</molecule>
    <text evidence="6">Up-regulated in cultured cells as they reach high density (at protein level).</text>
</comment>
<comment type="induction">
    <molecule>Isoform 1</molecule>
    <text evidence="6">Expression levels are unaffected by cell density.</text>
</comment>
<comment type="domain">
    <text evidence="2">The 9aaTAD motif is a transactivation domain present in a large number of yeast and animal transcription factors.</text>
</comment>
<comment type="PTM">
    <text evidence="2 8">Phosphorylated by PRKDC (By similarity). Phosphorylation at Ser-344 by PIM2 leads to the stabilization of MYC (PubMed:18438430). Phosphorylation at Ser-77 by CDK2 prevents Ras-induced senescence. Phosphorylated at Ser-77 by DYRK2; this primes the protein for subsequent phosphorylation by GSK3B at Thr-73. Phosphorylation at Thr-73 and Ser-77 by GSK3 is required for ubiquitination and degradation by the proteasome. Dephosphorylation at multiple sites by the PNUTS-PP1 complex promotes MYC stability by preventing ubiquitination by the SCF(FBXW7) complex. Dephosphorylation at Ser-77 by protein phosphatase 2A (PPP2CA) promotes its degradation; interaction with PPP2CA is enhanced by AMBRA1 (By similarity).</text>
</comment>
<comment type="PTM">
    <text evidence="2 9">Ubiquitinated by the SCF(FBXW7) complex when phosphorylated at Thr-73 and Ser-77, leading to its degradation by the proteasome. Ubiquitination is counteracted by USP28 in the nucleoplasm and USP36 in the nucleolus, both interacting with of FBXW7, leading to its deubiquitination and preventing degradation. Also polyubiquitinated by the DCX(TRPC4AP) complex (By similarity). Ubiquitinated by UBR5 when not forming a heterodimer with another bHLH protein, leading to its degradation: UBR5 recognizes and binds a degron that is only available upon heterodimer dissociation (By similarity). Ubiquitinated by TRIM6 in a phosphorylation-independent manner (PubMed:22328504).</text>
</comment>
<comment type="biotechnology">
    <text evidence="7">POU5F1/OCT4, SOX2, MYC/c-Myc and KLF4 are the four Yamanaka factors. When combined, these factors are sufficient to reprogram differentiated cells to an embryonic-like state designated iPS (induced pluripotent stem) cells. iPS cells exhibit the morphology and growth properties of ES cells and express ES cell marker genes.</text>
</comment>
<comment type="miscellaneous">
    <text evidence="15">Alternative translation initiation from an upstream, in-frame non-ATG (CTG) codon or a downstream ATG start site results in the production of 2 isoforms with distinct N-termini, shown in this entry as isoforms 2/3 and isoform 1, respectively.</text>
</comment>
<comment type="miscellaneous">
    <molecule>Isoform 2</molecule>
    <text evidence="15">Produced by alternative translation initiation from a CTG codon, which is translated as Met.</text>
</comment>
<comment type="miscellaneous">
    <molecule>Isoform 3</molecule>
    <text evidence="15">Produced by alternative translation initiation from a CTG codon, which is translated as Met, and alternative splicing.</text>
</comment>
<comment type="sequence caution" evidence="14">
    <conflict type="erroneous initiation">
        <sequence resource="EMBL-CDS" id="AAH06728"/>
    </conflict>
    <text>Extended N-terminus.</text>
</comment>
<organism>
    <name type="scientific">Mus musculus</name>
    <name type="common">Mouse</name>
    <dbReference type="NCBI Taxonomy" id="10090"/>
    <lineage>
        <taxon>Eukaryota</taxon>
        <taxon>Metazoa</taxon>
        <taxon>Chordata</taxon>
        <taxon>Craniata</taxon>
        <taxon>Vertebrata</taxon>
        <taxon>Euteleostomi</taxon>
        <taxon>Mammalia</taxon>
        <taxon>Eutheria</taxon>
        <taxon>Euarchontoglires</taxon>
        <taxon>Glires</taxon>
        <taxon>Rodentia</taxon>
        <taxon>Myomorpha</taxon>
        <taxon>Muroidea</taxon>
        <taxon>Muridae</taxon>
        <taxon>Murinae</taxon>
        <taxon>Mus</taxon>
        <taxon>Mus</taxon>
    </lineage>
</organism>
<proteinExistence type="evidence at protein level"/>
<evidence type="ECO:0000250" key="1"/>
<evidence type="ECO:0000250" key="2">
    <source>
        <dbReference type="UniProtKB" id="P01106"/>
    </source>
</evidence>
<evidence type="ECO:0000255" key="3">
    <source>
        <dbReference type="PROSITE-ProRule" id="PRU00981"/>
    </source>
</evidence>
<evidence type="ECO:0000256" key="4">
    <source>
        <dbReference type="SAM" id="MobiDB-lite"/>
    </source>
</evidence>
<evidence type="ECO:0000269" key="5">
    <source>
    </source>
</evidence>
<evidence type="ECO:0000269" key="6">
    <source>
    </source>
</evidence>
<evidence type="ECO:0000269" key="7">
    <source>
    </source>
</evidence>
<evidence type="ECO:0000269" key="8">
    <source>
    </source>
</evidence>
<evidence type="ECO:0000269" key="9">
    <source>
    </source>
</evidence>
<evidence type="ECO:0000269" key="10">
    <source>
    </source>
</evidence>
<evidence type="ECO:0000269" key="11">
    <source>
    </source>
</evidence>
<evidence type="ECO:0000269" key="12">
    <source>
    </source>
</evidence>
<evidence type="ECO:0000303" key="13">
    <source>
    </source>
</evidence>
<evidence type="ECO:0000305" key="14"/>
<evidence type="ECO:0000305" key="15">
    <source>
    </source>
</evidence>
<evidence type="ECO:0007744" key="16">
    <source>
    </source>
</evidence>
<name>MYC_MOUSE</name>
<sequence>MDFLWALETPQTATTMPLNVNFTNRNYDLDYDSVQPYFICDEEENFYHQQQQSELQPPAPSEDIWKKFELLPTPPLSPSRRSGLCSPSYVAVATSFSPREDDDGGGGNFSTADQLEMMTELLGGDMVNQSFICDPDDETFIKNIIIQDCMWSGFSAAAKLVSEKLASYQAARKDSTSLSPARGHSVCSTSSLYLQDLTAAASECIDPSVVFPYPLNDSSSPKSCTSSDSTAFSPSSDSLLSSESSPRASPEPLVLHEETPPTTSSDSEEEQEDEEEIDVVSVEKRQTPAKRSESGSSPSRGHSKPPHSPLVLKRCHVSTHQHNYAAPPSTRKDYPAAKRAKLDSGRVLKQISNNRKCSSPRSSDTEENDKRRTHNVLERQRRNELKRSFFALRDQIPELENNEKAPKVVILKKATAYILSIQADEHKLTSEKDLLRKRREQLKHKLEQLRNSGA</sequence>
<dbReference type="EMBL" id="L00039">
    <property type="protein sequence ID" value="AAB59728.1"/>
    <property type="molecule type" value="Genomic_DNA"/>
</dbReference>
<dbReference type="EMBL" id="L00038">
    <property type="protein sequence ID" value="AAB59728.1"/>
    <property type="status" value="JOINED"/>
    <property type="molecule type" value="Genomic_DNA"/>
</dbReference>
<dbReference type="EMBL" id="X01023">
    <property type="protein sequence ID" value="CAA25508.1"/>
    <property type="molecule type" value="mRNA"/>
</dbReference>
<dbReference type="EMBL" id="AK087961">
    <property type="protein sequence ID" value="BAC40060.1"/>
    <property type="molecule type" value="mRNA"/>
</dbReference>
<dbReference type="EMBL" id="AK133952">
    <property type="protein sequence ID" value="BAE21948.1"/>
    <property type="molecule type" value="mRNA"/>
</dbReference>
<dbReference type="EMBL" id="AK145084">
    <property type="protein sequence ID" value="BAE26228.1"/>
    <property type="molecule type" value="mRNA"/>
</dbReference>
<dbReference type="EMBL" id="BC006728">
    <property type="protein sequence ID" value="AAH06728.2"/>
    <property type="status" value="ALT_INIT"/>
    <property type="molecule type" value="mRNA"/>
</dbReference>
<dbReference type="EMBL" id="BC138931">
    <property type="protein sequence ID" value="AAI38932.1"/>
    <property type="molecule type" value="mRNA"/>
</dbReference>
<dbReference type="EMBL" id="BC138932">
    <property type="protein sequence ID" value="AAI38933.1"/>
    <property type="molecule type" value="mRNA"/>
</dbReference>
<dbReference type="EMBL" id="K00683">
    <property type="status" value="NOT_ANNOTATED_CDS"/>
    <property type="molecule type" value="Genomic_DNA"/>
</dbReference>
<dbReference type="CCDS" id="CCDS27504.1">
    <molecule id="P01108-1"/>
</dbReference>
<dbReference type="CCDS" id="CCDS49614.1">
    <molecule id="P01108-3"/>
</dbReference>
<dbReference type="CCDS" id="CCDS49615.1">
    <molecule id="P01108-2"/>
</dbReference>
<dbReference type="PIR" id="A93337">
    <property type="entry name" value="TVMS"/>
</dbReference>
<dbReference type="RefSeq" id="NP_001170823.1">
    <molecule id="P01108-2"/>
    <property type="nucleotide sequence ID" value="NM_001177352.1"/>
</dbReference>
<dbReference type="RefSeq" id="NP_001170824.1">
    <molecule id="P01108-3"/>
    <property type="nucleotide sequence ID" value="NM_001177353.1"/>
</dbReference>
<dbReference type="RefSeq" id="NP_001170825.1">
    <molecule id="P01108-2"/>
    <property type="nucleotide sequence ID" value="NM_001177354.1"/>
</dbReference>
<dbReference type="RefSeq" id="NP_034979.3">
    <molecule id="P01108-1"/>
    <property type="nucleotide sequence ID" value="NM_010849.4"/>
</dbReference>
<dbReference type="SMR" id="P01108"/>
<dbReference type="BioGRID" id="201635">
    <property type="interactions" value="38"/>
</dbReference>
<dbReference type="ComplexPortal" id="CPX-1144">
    <property type="entry name" value="FOXO3-MYC complex"/>
</dbReference>
<dbReference type="ComplexPortal" id="CPX-744">
    <property type="entry name" value="c-MYC-BIN1 complex"/>
</dbReference>
<dbReference type="ComplexPortal" id="CPX-97">
    <property type="entry name" value="Myc-Max transcriptional activator complex"/>
</dbReference>
<dbReference type="CORUM" id="P01108"/>
<dbReference type="DIP" id="DIP-1064N"/>
<dbReference type="FunCoup" id="P01108">
    <property type="interactions" value="2358"/>
</dbReference>
<dbReference type="IntAct" id="P01108">
    <property type="interactions" value="17"/>
</dbReference>
<dbReference type="STRING" id="10090.ENSMUSP00000022971"/>
<dbReference type="GlyCosmos" id="P01108">
    <property type="glycosylation" value="1 site, No reported glycans"/>
</dbReference>
<dbReference type="GlyGen" id="P01108">
    <property type="glycosylation" value="2 sites, 1 O-linked glycan (1 site)"/>
</dbReference>
<dbReference type="iPTMnet" id="P01108"/>
<dbReference type="PhosphoSitePlus" id="P01108"/>
<dbReference type="PaxDb" id="10090-ENSMUSP00000022971"/>
<dbReference type="PeptideAtlas" id="P01108"/>
<dbReference type="ProteomicsDB" id="293593"/>
<dbReference type="ProteomicsDB" id="310077"/>
<dbReference type="ProteomicsDB" id="333267"/>
<dbReference type="ProteomicsDB" id="363254"/>
<dbReference type="ProteomicsDB" id="369485"/>
<dbReference type="DNASU" id="17869"/>
<dbReference type="Ensembl" id="ENSMUST00000159327.2">
    <molecule id="P01108-2"/>
    <property type="protein sequence ID" value="ENSMUSP00000124758.2"/>
    <property type="gene ID" value="ENSMUSG00000022346.18"/>
</dbReference>
<dbReference type="Ensembl" id="ENSMUST00000160009.2">
    <molecule id="P01108-2"/>
    <property type="protein sequence ID" value="ENSMUSP00000123852.2"/>
    <property type="gene ID" value="ENSMUSG00000022346.18"/>
</dbReference>
<dbReference type="Ensembl" id="ENSMUST00000161976.8">
    <molecule id="P01108-2"/>
    <property type="protein sequence ID" value="ENSMUSP00000123821.2"/>
    <property type="gene ID" value="ENSMUSG00000022346.18"/>
</dbReference>
<dbReference type="GeneID" id="17869"/>
<dbReference type="KEGG" id="mmu:17869"/>
<dbReference type="UCSC" id="uc007vyh.2">
    <molecule id="P01108-1"/>
    <property type="organism name" value="mouse"/>
</dbReference>
<dbReference type="AGR" id="MGI:97250"/>
<dbReference type="CTD" id="4609"/>
<dbReference type="MGI" id="MGI:97250">
    <property type="gene designation" value="Myc"/>
</dbReference>
<dbReference type="VEuPathDB" id="HostDB:ENSMUSG00000022346"/>
<dbReference type="eggNOG" id="KOG2483">
    <property type="taxonomic scope" value="Eukaryota"/>
</dbReference>
<dbReference type="GeneTree" id="ENSGT00940000155285"/>
<dbReference type="HOGENOM" id="CLU_052560_0_0_1"/>
<dbReference type="InParanoid" id="P01108"/>
<dbReference type="OMA" id="FPYPLHD"/>
<dbReference type="OrthoDB" id="82738at9989"/>
<dbReference type="PhylomeDB" id="P01108"/>
<dbReference type="TreeFam" id="TF106001"/>
<dbReference type="Reactome" id="R-MMU-5689880">
    <property type="pathway name" value="Ub-specific processing proteases"/>
</dbReference>
<dbReference type="Reactome" id="R-MMU-8866911">
    <property type="pathway name" value="TFAP2 (AP-2) family regulates transcription of cell cycle factors"/>
</dbReference>
<dbReference type="BioGRID-ORCS" id="17869">
    <property type="hits" value="29 hits in 81 CRISPR screens"/>
</dbReference>
<dbReference type="ChiTaRS" id="Myc">
    <property type="organism name" value="mouse"/>
</dbReference>
<dbReference type="PRO" id="PR:P01108"/>
<dbReference type="Proteomes" id="UP000000589">
    <property type="component" value="Chromosome 15"/>
</dbReference>
<dbReference type="RNAct" id="P01108">
    <property type="molecule type" value="protein"/>
</dbReference>
<dbReference type="Bgee" id="ENSMUSG00000022346">
    <property type="expression patterns" value="Expressed in ectoplacental cone and 269 other cell types or tissues"/>
</dbReference>
<dbReference type="ExpressionAtlas" id="P01108">
    <property type="expression patterns" value="baseline and differential"/>
</dbReference>
<dbReference type="GO" id="GO:0030424">
    <property type="term" value="C:axon"/>
    <property type="evidence" value="ECO:0000314"/>
    <property type="project" value="MGI"/>
</dbReference>
<dbReference type="GO" id="GO:0000791">
    <property type="term" value="C:euchromatin"/>
    <property type="evidence" value="ECO:0000314"/>
    <property type="project" value="BHF-UCL"/>
</dbReference>
<dbReference type="GO" id="GO:0071943">
    <property type="term" value="C:Myc-Max complex"/>
    <property type="evidence" value="ECO:0000353"/>
    <property type="project" value="ComplexPortal"/>
</dbReference>
<dbReference type="GO" id="GO:0016604">
    <property type="term" value="C:nuclear body"/>
    <property type="evidence" value="ECO:0000314"/>
    <property type="project" value="MGI"/>
</dbReference>
<dbReference type="GO" id="GO:0005730">
    <property type="term" value="C:nucleolus"/>
    <property type="evidence" value="ECO:0000250"/>
    <property type="project" value="UniProtKB"/>
</dbReference>
<dbReference type="GO" id="GO:0005654">
    <property type="term" value="C:nucleoplasm"/>
    <property type="evidence" value="ECO:0000250"/>
    <property type="project" value="UniProtKB"/>
</dbReference>
<dbReference type="GO" id="GO:0005634">
    <property type="term" value="C:nucleus"/>
    <property type="evidence" value="ECO:0000314"/>
    <property type="project" value="UniProtKB"/>
</dbReference>
<dbReference type="GO" id="GO:0048471">
    <property type="term" value="C:perinuclear region of cytoplasm"/>
    <property type="evidence" value="ECO:0000314"/>
    <property type="project" value="UniProtKB"/>
</dbReference>
<dbReference type="GO" id="GO:0090571">
    <property type="term" value="C:RNA polymerase II transcription repressor complex"/>
    <property type="evidence" value="ECO:0000266"/>
    <property type="project" value="ComplexPortal"/>
</dbReference>
<dbReference type="GO" id="GO:0005819">
    <property type="term" value="C:spindle"/>
    <property type="evidence" value="ECO:0000314"/>
    <property type="project" value="MGI"/>
</dbReference>
<dbReference type="GO" id="GO:0000987">
    <property type="term" value="F:cis-regulatory region sequence-specific DNA binding"/>
    <property type="evidence" value="ECO:0000314"/>
    <property type="project" value="MGI"/>
</dbReference>
<dbReference type="GO" id="GO:0001046">
    <property type="term" value="F:core promoter sequence-specific DNA binding"/>
    <property type="evidence" value="ECO:0007669"/>
    <property type="project" value="Ensembl"/>
</dbReference>
<dbReference type="GO" id="GO:0003677">
    <property type="term" value="F:DNA binding"/>
    <property type="evidence" value="ECO:0000314"/>
    <property type="project" value="MGI"/>
</dbReference>
<dbReference type="GO" id="GO:0001228">
    <property type="term" value="F:DNA-binding transcription activator activity, RNA polymerase II-specific"/>
    <property type="evidence" value="ECO:0007669"/>
    <property type="project" value="Ensembl"/>
</dbReference>
<dbReference type="GO" id="GO:0000981">
    <property type="term" value="F:DNA-binding transcription factor activity, RNA polymerase II-specific"/>
    <property type="evidence" value="ECO:0000250"/>
    <property type="project" value="UniProtKB"/>
</dbReference>
<dbReference type="GO" id="GO:0140297">
    <property type="term" value="F:DNA-binding transcription factor binding"/>
    <property type="evidence" value="ECO:0007669"/>
    <property type="project" value="Ensembl"/>
</dbReference>
<dbReference type="GO" id="GO:0001227">
    <property type="term" value="F:DNA-binding transcription repressor activity, RNA polymerase II-specific"/>
    <property type="evidence" value="ECO:0007669"/>
    <property type="project" value="Ensembl"/>
</dbReference>
<dbReference type="GO" id="GO:0070888">
    <property type="term" value="F:E-box binding"/>
    <property type="evidence" value="ECO:0000250"/>
    <property type="project" value="UniProtKB"/>
</dbReference>
<dbReference type="GO" id="GO:0042802">
    <property type="term" value="F:identical protein binding"/>
    <property type="evidence" value="ECO:0007669"/>
    <property type="project" value="Ensembl"/>
</dbReference>
<dbReference type="GO" id="GO:0046983">
    <property type="term" value="F:protein dimerization activity"/>
    <property type="evidence" value="ECO:0007669"/>
    <property type="project" value="InterPro"/>
</dbReference>
<dbReference type="GO" id="GO:0044877">
    <property type="term" value="F:protein-containing complex binding"/>
    <property type="evidence" value="ECO:0000250"/>
    <property type="project" value="UniProtKB"/>
</dbReference>
<dbReference type="GO" id="GO:0000978">
    <property type="term" value="F:RNA polymerase II cis-regulatory region sequence-specific DNA binding"/>
    <property type="evidence" value="ECO:0000314"/>
    <property type="project" value="MGI"/>
</dbReference>
<dbReference type="GO" id="GO:1905761">
    <property type="term" value="F:SCF ubiquitin ligase complex binding"/>
    <property type="evidence" value="ECO:0007669"/>
    <property type="project" value="Ensembl"/>
</dbReference>
<dbReference type="GO" id="GO:0001221">
    <property type="term" value="F:transcription coregulator binding"/>
    <property type="evidence" value="ECO:0007669"/>
    <property type="project" value="Ensembl"/>
</dbReference>
<dbReference type="GO" id="GO:0140537">
    <property type="term" value="F:transcription regulator activator activity"/>
    <property type="evidence" value="ECO:0007669"/>
    <property type="project" value="Ensembl"/>
</dbReference>
<dbReference type="GO" id="GO:0031625">
    <property type="term" value="F:ubiquitin protein ligase binding"/>
    <property type="evidence" value="ECO:0000353"/>
    <property type="project" value="UniProtKB"/>
</dbReference>
<dbReference type="GO" id="GO:1990863">
    <property type="term" value="P:acinar cell proliferation"/>
    <property type="evidence" value="ECO:0000316"/>
    <property type="project" value="MGI"/>
</dbReference>
<dbReference type="GO" id="GO:0001783">
    <property type="term" value="P:B cell apoptotic process"/>
    <property type="evidence" value="ECO:0000315"/>
    <property type="project" value="MGI"/>
</dbReference>
<dbReference type="GO" id="GO:0001658">
    <property type="term" value="P:branching involved in ureteric bud morphogenesis"/>
    <property type="evidence" value="ECO:0000315"/>
    <property type="project" value="UniProtKB"/>
</dbReference>
<dbReference type="GO" id="GO:0008283">
    <property type="term" value="P:cell population proliferation"/>
    <property type="evidence" value="ECO:0000316"/>
    <property type="project" value="MGI"/>
</dbReference>
<dbReference type="GO" id="GO:0071456">
    <property type="term" value="P:cellular response to hypoxia"/>
    <property type="evidence" value="ECO:0007669"/>
    <property type="project" value="Ensembl"/>
</dbReference>
<dbReference type="GO" id="GO:0035457">
    <property type="term" value="P:cellular response to interferon-alpha"/>
    <property type="evidence" value="ECO:0000314"/>
    <property type="project" value="MGI"/>
</dbReference>
<dbReference type="GO" id="GO:0034644">
    <property type="term" value="P:cellular response to UV"/>
    <property type="evidence" value="ECO:0007669"/>
    <property type="project" value="Ensembl"/>
</dbReference>
<dbReference type="GO" id="GO:0071466">
    <property type="term" value="P:cellular response to xenobiotic stimulus"/>
    <property type="evidence" value="ECO:0007669"/>
    <property type="project" value="Ensembl"/>
</dbReference>
<dbReference type="GO" id="GO:0006338">
    <property type="term" value="P:chromatin remodeling"/>
    <property type="evidence" value="ECO:0000250"/>
    <property type="project" value="UniProtKB"/>
</dbReference>
<dbReference type="GO" id="GO:0051276">
    <property type="term" value="P:chromosome organization"/>
    <property type="evidence" value="ECO:0000250"/>
    <property type="project" value="UniProtKB"/>
</dbReference>
<dbReference type="GO" id="GO:0050910">
    <property type="term" value="P:detection of mechanical stimulus involved in sensory perception of sound"/>
    <property type="evidence" value="ECO:0000315"/>
    <property type="project" value="MGI"/>
</dbReference>
<dbReference type="GO" id="GO:0006974">
    <property type="term" value="P:DNA damage response"/>
    <property type="evidence" value="ECO:0000314"/>
    <property type="project" value="MGI"/>
</dbReference>
<dbReference type="GO" id="GO:0070371">
    <property type="term" value="P:ERK1 and ERK2 cascade"/>
    <property type="evidence" value="ECO:0007669"/>
    <property type="project" value="Ensembl"/>
</dbReference>
<dbReference type="GO" id="GO:0000082">
    <property type="term" value="P:G1/S transition of mitotic cell cycle"/>
    <property type="evidence" value="ECO:0000250"/>
    <property type="project" value="UniProtKB"/>
</dbReference>
<dbReference type="GO" id="GO:0006879">
    <property type="term" value="P:intracellular iron ion homeostasis"/>
    <property type="evidence" value="ECO:0000250"/>
    <property type="project" value="UniProtKB"/>
</dbReference>
<dbReference type="GO" id="GO:0008630">
    <property type="term" value="P:intrinsic apoptotic signaling pathway in response to DNA damage"/>
    <property type="evidence" value="ECO:0000314"/>
    <property type="project" value="MGI"/>
</dbReference>
<dbReference type="GO" id="GO:0000165">
    <property type="term" value="P:MAPK cascade"/>
    <property type="evidence" value="ECO:0000250"/>
    <property type="project" value="UniProtKB"/>
</dbReference>
<dbReference type="GO" id="GO:0042474">
    <property type="term" value="P:middle ear morphogenesis"/>
    <property type="evidence" value="ECO:0000315"/>
    <property type="project" value="MGI"/>
</dbReference>
<dbReference type="GO" id="GO:0014902">
    <property type="term" value="P:myotube differentiation"/>
    <property type="evidence" value="ECO:0000315"/>
    <property type="project" value="MGI"/>
</dbReference>
<dbReference type="GO" id="GO:0051782">
    <property type="term" value="P:negative regulation of cell division"/>
    <property type="evidence" value="ECO:0000250"/>
    <property type="project" value="UniProtKB"/>
</dbReference>
<dbReference type="GO" id="GO:0048147">
    <property type="term" value="P:negative regulation of fibroblast proliferation"/>
    <property type="evidence" value="ECO:0007669"/>
    <property type="project" value="Ensembl"/>
</dbReference>
<dbReference type="GO" id="GO:0044027">
    <property type="term" value="P:negative regulation of gene expression via chromosomal CpG island methylation"/>
    <property type="evidence" value="ECO:0007669"/>
    <property type="project" value="Ensembl"/>
</dbReference>
<dbReference type="GO" id="GO:0045656">
    <property type="term" value="P:negative regulation of monocyte differentiation"/>
    <property type="evidence" value="ECO:0000250"/>
    <property type="project" value="UniProtKB"/>
</dbReference>
<dbReference type="GO" id="GO:0000122">
    <property type="term" value="P:negative regulation of transcription by RNA polymerase II"/>
    <property type="evidence" value="ECO:0000314"/>
    <property type="project" value="MGI"/>
</dbReference>
<dbReference type="GO" id="GO:0060633">
    <property type="term" value="P:negative regulation of transcription initiation by RNA polymerase II"/>
    <property type="evidence" value="ECO:0007669"/>
    <property type="project" value="Ensembl"/>
</dbReference>
<dbReference type="GO" id="GO:0001866">
    <property type="term" value="P:NK T cell proliferation"/>
    <property type="evidence" value="ECO:0000315"/>
    <property type="project" value="MGI"/>
</dbReference>
<dbReference type="GO" id="GO:0043473">
    <property type="term" value="P:pigmentation"/>
    <property type="evidence" value="ECO:0000315"/>
    <property type="project" value="MGI"/>
</dbReference>
<dbReference type="GO" id="GO:1904699">
    <property type="term" value="P:positive regulation of acinar cell proliferation"/>
    <property type="evidence" value="ECO:0000316"/>
    <property type="project" value="MGI"/>
</dbReference>
<dbReference type="GO" id="GO:2001235">
    <property type="term" value="P:positive regulation of apoptotic signaling pathway"/>
    <property type="evidence" value="ECO:0000314"/>
    <property type="project" value="MGI"/>
</dbReference>
<dbReference type="GO" id="GO:0002904">
    <property type="term" value="P:positive regulation of B cell apoptotic process"/>
    <property type="evidence" value="ECO:0000316"/>
    <property type="project" value="MGI"/>
</dbReference>
<dbReference type="GO" id="GO:0008284">
    <property type="term" value="P:positive regulation of cell population proliferation"/>
    <property type="evidence" value="ECO:0000314"/>
    <property type="project" value="MGI"/>
</dbReference>
<dbReference type="GO" id="GO:0045893">
    <property type="term" value="P:positive regulation of DNA-templated transcription"/>
    <property type="evidence" value="ECO:0000314"/>
    <property type="project" value="ComplexPortal"/>
</dbReference>
<dbReference type="GO" id="GO:0050679">
    <property type="term" value="P:positive regulation of epithelial cell proliferation"/>
    <property type="evidence" value="ECO:0000250"/>
    <property type="project" value="UniProtKB"/>
</dbReference>
<dbReference type="GO" id="GO:0048146">
    <property type="term" value="P:positive regulation of fibroblast proliferation"/>
    <property type="evidence" value="ECO:0000250"/>
    <property type="project" value="UniProtKB"/>
</dbReference>
<dbReference type="GO" id="GO:0010628">
    <property type="term" value="P:positive regulation of gene expression"/>
    <property type="evidence" value="ECO:0007669"/>
    <property type="project" value="Ensembl"/>
</dbReference>
<dbReference type="GO" id="GO:1902255">
    <property type="term" value="P:positive regulation of intrinsic apoptotic signaling pathway by p53 class mediator"/>
    <property type="evidence" value="ECO:0007669"/>
    <property type="project" value="Ensembl"/>
</dbReference>
<dbReference type="GO" id="GO:0002053">
    <property type="term" value="P:positive regulation of mesenchymal cell proliferation"/>
    <property type="evidence" value="ECO:0000315"/>
    <property type="project" value="UniProtKB"/>
</dbReference>
<dbReference type="GO" id="GO:0090096">
    <property type="term" value="P:positive regulation of metanephric cap mesenchymal cell proliferation"/>
    <property type="evidence" value="ECO:0000315"/>
    <property type="project" value="UniProtKB"/>
</dbReference>
<dbReference type="GO" id="GO:1902895">
    <property type="term" value="P:positive regulation of miRNA transcription"/>
    <property type="evidence" value="ECO:0007669"/>
    <property type="project" value="Ensembl"/>
</dbReference>
<dbReference type="GO" id="GO:0032206">
    <property type="term" value="P:positive regulation of telomere maintenance"/>
    <property type="evidence" value="ECO:0000315"/>
    <property type="project" value="BHF-UCL"/>
</dbReference>
<dbReference type="GO" id="GO:0045944">
    <property type="term" value="P:positive regulation of transcription by RNA polymerase II"/>
    <property type="evidence" value="ECO:0000314"/>
    <property type="project" value="BHF-UCL"/>
</dbReference>
<dbReference type="GO" id="GO:0060261">
    <property type="term" value="P:positive regulation of transcription initiation by RNA polymerase II"/>
    <property type="evidence" value="ECO:0000314"/>
    <property type="project" value="CACAO"/>
</dbReference>
<dbReference type="GO" id="GO:0016485">
    <property type="term" value="P:protein processing"/>
    <property type="evidence" value="ECO:0000315"/>
    <property type="project" value="MGI"/>
</dbReference>
<dbReference type="GO" id="GO:0032986">
    <property type="term" value="P:protein-DNA complex disassembly"/>
    <property type="evidence" value="ECO:0007669"/>
    <property type="project" value="Ensembl"/>
</dbReference>
<dbReference type="GO" id="GO:0042981">
    <property type="term" value="P:regulation of apoptotic process"/>
    <property type="evidence" value="ECO:0000314"/>
    <property type="project" value="MGI"/>
</dbReference>
<dbReference type="GO" id="GO:0010564">
    <property type="term" value="P:regulation of cell cycle process"/>
    <property type="evidence" value="ECO:0000266"/>
    <property type="project" value="ComplexPortal"/>
</dbReference>
<dbReference type="GO" id="GO:0006355">
    <property type="term" value="P:regulation of DNA-templated transcription"/>
    <property type="evidence" value="ECO:0000314"/>
    <property type="project" value="UniProtKB"/>
</dbReference>
<dbReference type="GO" id="GO:0010468">
    <property type="term" value="P:regulation of gene expression"/>
    <property type="evidence" value="ECO:0000314"/>
    <property type="project" value="MGI"/>
</dbReference>
<dbReference type="GO" id="GO:1904672">
    <property type="term" value="P:regulation of somatic stem cell population maintenance"/>
    <property type="evidence" value="ECO:0000314"/>
    <property type="project" value="UniProtKB"/>
</dbReference>
<dbReference type="GO" id="GO:0032204">
    <property type="term" value="P:regulation of telomere maintenance"/>
    <property type="evidence" value="ECO:0000250"/>
    <property type="project" value="UniProtKB"/>
</dbReference>
<dbReference type="GO" id="GO:0043279">
    <property type="term" value="P:response to alkaloid"/>
    <property type="evidence" value="ECO:0000315"/>
    <property type="project" value="MGI"/>
</dbReference>
<dbReference type="GO" id="GO:0009314">
    <property type="term" value="P:response to radiation"/>
    <property type="evidence" value="ECO:0000314"/>
    <property type="project" value="MGI"/>
</dbReference>
<dbReference type="GO" id="GO:0016072">
    <property type="term" value="P:rRNA metabolic process"/>
    <property type="evidence" value="ECO:0000250"/>
    <property type="project" value="UniProtKB"/>
</dbReference>
<dbReference type="GO" id="GO:0035914">
    <property type="term" value="P:skeletal muscle cell differentiation"/>
    <property type="evidence" value="ECO:0000315"/>
    <property type="project" value="MGI"/>
</dbReference>
<dbReference type="GO" id="GO:0048705">
    <property type="term" value="P:skeletal system morphogenesis"/>
    <property type="evidence" value="ECO:0000315"/>
    <property type="project" value="MGI"/>
</dbReference>
<dbReference type="GO" id="GO:0006366">
    <property type="term" value="P:transcription by RNA polymerase II"/>
    <property type="evidence" value="ECO:0000315"/>
    <property type="project" value="MGI"/>
</dbReference>
<dbReference type="GO" id="GO:0016055">
    <property type="term" value="P:Wnt signaling pathway"/>
    <property type="evidence" value="ECO:0000314"/>
    <property type="project" value="MGI"/>
</dbReference>
<dbReference type="CDD" id="cd11458">
    <property type="entry name" value="bHLHzip_c-Myc"/>
    <property type="match status" value="1"/>
</dbReference>
<dbReference type="FunFam" id="4.10.280.10:FF:000019">
    <property type="entry name" value="Myc proto-oncogene protein"/>
    <property type="match status" value="1"/>
</dbReference>
<dbReference type="Gene3D" id="4.10.280.10">
    <property type="entry name" value="Helix-loop-helix DNA-binding domain"/>
    <property type="match status" value="1"/>
</dbReference>
<dbReference type="InterPro" id="IPR011598">
    <property type="entry name" value="bHLH_dom"/>
</dbReference>
<dbReference type="InterPro" id="IPR036638">
    <property type="entry name" value="HLH_DNA-bd_sf"/>
</dbReference>
<dbReference type="InterPro" id="IPR003327">
    <property type="entry name" value="Myc-LZ"/>
</dbReference>
<dbReference type="InterPro" id="IPR050433">
    <property type="entry name" value="Myc_transcription_factors"/>
</dbReference>
<dbReference type="InterPro" id="IPR002418">
    <property type="entry name" value="Tscrpt_reg_Myc"/>
</dbReference>
<dbReference type="InterPro" id="IPR012682">
    <property type="entry name" value="Tscrpt_reg_Myc_N"/>
</dbReference>
<dbReference type="PANTHER" id="PTHR45851">
    <property type="entry name" value="MYC PROTO-ONCOGENE"/>
    <property type="match status" value="1"/>
</dbReference>
<dbReference type="Pfam" id="PF00010">
    <property type="entry name" value="HLH"/>
    <property type="match status" value="1"/>
</dbReference>
<dbReference type="Pfam" id="PF02344">
    <property type="entry name" value="Myc-LZ"/>
    <property type="match status" value="1"/>
</dbReference>
<dbReference type="Pfam" id="PF01056">
    <property type="entry name" value="Myc_N"/>
    <property type="match status" value="1"/>
</dbReference>
<dbReference type="PIRSF" id="PIRSF001705">
    <property type="entry name" value="Myc_protein"/>
    <property type="match status" value="1"/>
</dbReference>
<dbReference type="PRINTS" id="PR00044">
    <property type="entry name" value="LEUZIPPRMYC"/>
</dbReference>
<dbReference type="SMART" id="SM00353">
    <property type="entry name" value="HLH"/>
    <property type="match status" value="1"/>
</dbReference>
<dbReference type="SUPFAM" id="SSF47459">
    <property type="entry name" value="HLH, helix-loop-helix DNA-binding domain"/>
    <property type="match status" value="1"/>
</dbReference>
<dbReference type="PROSITE" id="PS50888">
    <property type="entry name" value="BHLH"/>
    <property type="match status" value="1"/>
</dbReference>
<reference key="1">
    <citation type="journal article" date="1983" name="EMBO J.">
        <title>Sequence of the murine and human cellular myc oncogenes and two modes of myc transcription resulting from chromosome translocation in B lymphoid tumours.</title>
        <authorList>
            <person name="Bernard O."/>
            <person name="Cory S."/>
            <person name="Gerondakis S."/>
            <person name="Webb E."/>
            <person name="Adams J.M."/>
        </authorList>
    </citation>
    <scope>NUCLEOTIDE SEQUENCE [GENOMIC DNA]</scope>
    <source>
        <strain>BALB/cJ</strain>
        <tissue>Spleen</tissue>
    </source>
</reference>
<reference key="2">
    <citation type="journal article" date="1984" name="Nature">
        <title>Nucleotide sequence comparison of normal and translocated murine c-myc genes.</title>
        <authorList>
            <person name="Stanton L.W."/>
            <person name="Fahrlander P.D."/>
            <person name="Tesser P.M."/>
            <person name="Marcu K.B."/>
        </authorList>
    </citation>
    <scope>NUCLEOTIDE SEQUENCE [MRNA] (ISOFORM 1)</scope>
</reference>
<reference key="3">
    <citation type="journal article" date="2005" name="Science">
        <title>The transcriptional landscape of the mammalian genome.</title>
        <authorList>
            <person name="Carninci P."/>
            <person name="Kasukawa T."/>
            <person name="Katayama S."/>
            <person name="Gough J."/>
            <person name="Frith M.C."/>
            <person name="Maeda N."/>
            <person name="Oyama R."/>
            <person name="Ravasi T."/>
            <person name="Lenhard B."/>
            <person name="Wells C."/>
            <person name="Kodzius R."/>
            <person name="Shimokawa K."/>
            <person name="Bajic V.B."/>
            <person name="Brenner S.E."/>
            <person name="Batalov S."/>
            <person name="Forrest A.R."/>
            <person name="Zavolan M."/>
            <person name="Davis M.J."/>
            <person name="Wilming L.G."/>
            <person name="Aidinis V."/>
            <person name="Allen J.E."/>
            <person name="Ambesi-Impiombato A."/>
            <person name="Apweiler R."/>
            <person name="Aturaliya R.N."/>
            <person name="Bailey T.L."/>
            <person name="Bansal M."/>
            <person name="Baxter L."/>
            <person name="Beisel K.W."/>
            <person name="Bersano T."/>
            <person name="Bono H."/>
            <person name="Chalk A.M."/>
            <person name="Chiu K.P."/>
            <person name="Choudhary V."/>
            <person name="Christoffels A."/>
            <person name="Clutterbuck D.R."/>
            <person name="Crowe M.L."/>
            <person name="Dalla E."/>
            <person name="Dalrymple B.P."/>
            <person name="de Bono B."/>
            <person name="Della Gatta G."/>
            <person name="di Bernardo D."/>
            <person name="Down T."/>
            <person name="Engstrom P."/>
            <person name="Fagiolini M."/>
            <person name="Faulkner G."/>
            <person name="Fletcher C.F."/>
            <person name="Fukushima T."/>
            <person name="Furuno M."/>
            <person name="Futaki S."/>
            <person name="Gariboldi M."/>
            <person name="Georgii-Hemming P."/>
            <person name="Gingeras T.R."/>
            <person name="Gojobori T."/>
            <person name="Green R.E."/>
            <person name="Gustincich S."/>
            <person name="Harbers M."/>
            <person name="Hayashi Y."/>
            <person name="Hensch T.K."/>
            <person name="Hirokawa N."/>
            <person name="Hill D."/>
            <person name="Huminiecki L."/>
            <person name="Iacono M."/>
            <person name="Ikeo K."/>
            <person name="Iwama A."/>
            <person name="Ishikawa T."/>
            <person name="Jakt M."/>
            <person name="Kanapin A."/>
            <person name="Katoh M."/>
            <person name="Kawasawa Y."/>
            <person name="Kelso J."/>
            <person name="Kitamura H."/>
            <person name="Kitano H."/>
            <person name="Kollias G."/>
            <person name="Krishnan S.P."/>
            <person name="Kruger A."/>
            <person name="Kummerfeld S.K."/>
            <person name="Kurochkin I.V."/>
            <person name="Lareau L.F."/>
            <person name="Lazarevic D."/>
            <person name="Lipovich L."/>
            <person name="Liu J."/>
            <person name="Liuni S."/>
            <person name="McWilliam S."/>
            <person name="Madan Babu M."/>
            <person name="Madera M."/>
            <person name="Marchionni L."/>
            <person name="Matsuda H."/>
            <person name="Matsuzawa S."/>
            <person name="Miki H."/>
            <person name="Mignone F."/>
            <person name="Miyake S."/>
            <person name="Morris K."/>
            <person name="Mottagui-Tabar S."/>
            <person name="Mulder N."/>
            <person name="Nakano N."/>
            <person name="Nakauchi H."/>
            <person name="Ng P."/>
            <person name="Nilsson R."/>
            <person name="Nishiguchi S."/>
            <person name="Nishikawa S."/>
            <person name="Nori F."/>
            <person name="Ohara O."/>
            <person name="Okazaki Y."/>
            <person name="Orlando V."/>
            <person name="Pang K.C."/>
            <person name="Pavan W.J."/>
            <person name="Pavesi G."/>
            <person name="Pesole G."/>
            <person name="Petrovsky N."/>
            <person name="Piazza S."/>
            <person name="Reed J."/>
            <person name="Reid J.F."/>
            <person name="Ring B.Z."/>
            <person name="Ringwald M."/>
            <person name="Rost B."/>
            <person name="Ruan Y."/>
            <person name="Salzberg S.L."/>
            <person name="Sandelin A."/>
            <person name="Schneider C."/>
            <person name="Schoenbach C."/>
            <person name="Sekiguchi K."/>
            <person name="Semple C.A."/>
            <person name="Seno S."/>
            <person name="Sessa L."/>
            <person name="Sheng Y."/>
            <person name="Shibata Y."/>
            <person name="Shimada H."/>
            <person name="Shimada K."/>
            <person name="Silva D."/>
            <person name="Sinclair B."/>
            <person name="Sperling S."/>
            <person name="Stupka E."/>
            <person name="Sugiura K."/>
            <person name="Sultana R."/>
            <person name="Takenaka Y."/>
            <person name="Taki K."/>
            <person name="Tammoja K."/>
            <person name="Tan S.L."/>
            <person name="Tang S."/>
            <person name="Taylor M.S."/>
            <person name="Tegner J."/>
            <person name="Teichmann S.A."/>
            <person name="Ueda H.R."/>
            <person name="van Nimwegen E."/>
            <person name="Verardo R."/>
            <person name="Wei C.L."/>
            <person name="Yagi K."/>
            <person name="Yamanishi H."/>
            <person name="Zabarovsky E."/>
            <person name="Zhu S."/>
            <person name="Zimmer A."/>
            <person name="Hide W."/>
            <person name="Bult C."/>
            <person name="Grimmond S.M."/>
            <person name="Teasdale R.D."/>
            <person name="Liu E.T."/>
            <person name="Brusic V."/>
            <person name="Quackenbush J."/>
            <person name="Wahlestedt C."/>
            <person name="Mattick J.S."/>
            <person name="Hume D.A."/>
            <person name="Kai C."/>
            <person name="Sasaki D."/>
            <person name="Tomaru Y."/>
            <person name="Fukuda S."/>
            <person name="Kanamori-Katayama M."/>
            <person name="Suzuki M."/>
            <person name="Aoki J."/>
            <person name="Arakawa T."/>
            <person name="Iida J."/>
            <person name="Imamura K."/>
            <person name="Itoh M."/>
            <person name="Kato T."/>
            <person name="Kawaji H."/>
            <person name="Kawagashira N."/>
            <person name="Kawashima T."/>
            <person name="Kojima M."/>
            <person name="Kondo S."/>
            <person name="Konno H."/>
            <person name="Nakano K."/>
            <person name="Ninomiya N."/>
            <person name="Nishio T."/>
            <person name="Okada M."/>
            <person name="Plessy C."/>
            <person name="Shibata K."/>
            <person name="Shiraki T."/>
            <person name="Suzuki S."/>
            <person name="Tagami M."/>
            <person name="Waki K."/>
            <person name="Watahiki A."/>
            <person name="Okamura-Oho Y."/>
            <person name="Suzuki H."/>
            <person name="Kawai J."/>
            <person name="Hayashizaki Y."/>
        </authorList>
    </citation>
    <scope>NUCLEOTIDE SEQUENCE [LARGE SCALE MRNA] (ISOFORM 1)</scope>
    <source>
        <strain>C57BL/6J</strain>
        <strain>NOD</strain>
        <tissue>Embryo</tissue>
        <tissue>Mammary gland</tissue>
        <tissue>Thymus</tissue>
    </source>
</reference>
<reference key="4">
    <citation type="journal article" date="2009" name="PLoS Biol.">
        <title>Lineage-specific biology revealed by a finished genome assembly of the mouse.</title>
        <authorList>
            <person name="Church D.M."/>
            <person name="Goodstadt L."/>
            <person name="Hillier L.W."/>
            <person name="Zody M.C."/>
            <person name="Goldstein S."/>
            <person name="She X."/>
            <person name="Bult C.J."/>
            <person name="Agarwala R."/>
            <person name="Cherry J.L."/>
            <person name="DiCuccio M."/>
            <person name="Hlavina W."/>
            <person name="Kapustin Y."/>
            <person name="Meric P."/>
            <person name="Maglott D."/>
            <person name="Birtle Z."/>
            <person name="Marques A.C."/>
            <person name="Graves T."/>
            <person name="Zhou S."/>
            <person name="Teague B."/>
            <person name="Potamousis K."/>
            <person name="Churas C."/>
            <person name="Place M."/>
            <person name="Herschleb J."/>
            <person name="Runnheim R."/>
            <person name="Forrest D."/>
            <person name="Amos-Landgraf J."/>
            <person name="Schwartz D.C."/>
            <person name="Cheng Z."/>
            <person name="Lindblad-Toh K."/>
            <person name="Eichler E.E."/>
            <person name="Ponting C.P."/>
        </authorList>
    </citation>
    <scope>NUCLEOTIDE SEQUENCE [LARGE SCALE GENOMIC DNA]</scope>
    <scope>IDENTIFICATION BY MASS SPECTROMETRY [LARGE SCALE ANALYSIS]</scope>
    <scope>IDENTIFICATION</scope>
    <source>
        <strain>C57BL/6J</strain>
    </source>
</reference>
<reference key="5">
    <citation type="journal article" date="2004" name="Genome Res.">
        <title>The status, quality, and expansion of the NIH full-length cDNA project: the Mammalian Gene Collection (MGC).</title>
        <authorList>
            <consortium name="The MGC Project Team"/>
        </authorList>
    </citation>
    <scope>NUCLEOTIDE SEQUENCE [LARGE SCALE MRNA] (ISOFORMS 1 AND 2)</scope>
    <source>
        <strain>FVB/N</strain>
        <tissue>Mammary gland</tissue>
    </source>
</reference>
<reference key="6">
    <citation type="journal article" date="1983" name="Nature">
        <title>Reciprocal chromosome translocation between c-myc and immunoglobulin gamma 2b genes.</title>
        <authorList>
            <person name="Neuberger M.S."/>
            <person name="Calabi F."/>
        </authorList>
    </citation>
    <scope>NUCLEOTIDE SEQUENCE [GENOMIC DNA] OF 11-267</scope>
</reference>
<reference key="7">
    <citation type="journal article" date="1988" name="Cell">
        <title>A non-AUG translational initiation in c-myc exon 1 generates an N-terminally distinct protein whose synthesis is disrupted in Burkitt's lymphomas.</title>
        <authorList>
            <person name="Hann S.R."/>
            <person name="King M.W."/>
            <person name="Bentley D.L."/>
            <person name="Anderson C.W."/>
            <person name="Eisenman R.N."/>
        </authorList>
    </citation>
    <scope>ALTERNATIVE TRANSLATION INITIATION</scope>
</reference>
<reference key="8">
    <citation type="journal article" date="1992" name="Genes Dev.">
        <title>Translational activation of the non-AUG-initiated c-myc 1 protein at high cell densities due to methionine deprivation.</title>
        <authorList>
            <person name="Hann S.R."/>
            <person name="Sloan-Brown K."/>
            <person name="Spotts G.D."/>
        </authorList>
    </citation>
    <scope>ALTERNATIVE TRANSLATION INITIATION</scope>
    <scope>INDUCTION BY HIGH CELL DENSITY</scope>
</reference>
<reference key="9">
    <citation type="journal article" date="1995" name="EMBO J.">
        <title>Mad3 and Mad4: novel Max-interacting transcriptional repressors that suppress c-myc dependent transformation and are expressed during neural and epidermal differentiation.</title>
        <authorList>
            <person name="Hurlin P.J."/>
            <person name="Queva C."/>
            <person name="Koskinen P.J."/>
            <person name="Steingrimsson E."/>
            <person name="Ayer D.E."/>
            <person name="Copeland N.G."/>
            <person name="Jenkins N.A."/>
            <person name="Eisenman R.N."/>
        </authorList>
    </citation>
    <scope>DEVELOPMENTAL STAGE</scope>
</reference>
<reference key="10">
    <citation type="journal article" date="1996" name="EMBO J.">
        <authorList>
            <person name="Hurlin P.J."/>
            <person name="Queva C."/>
            <person name="Koskinen P.J."/>
            <person name="Steingrimsson E."/>
            <person name="Ayer D.E."/>
            <person name="Copeland N.G."/>
            <person name="Jenkins N.A."/>
            <person name="Eisenman R.N."/>
        </authorList>
    </citation>
    <scope>ERRATUM OF PUBMED:8521822</scope>
</reference>
<reference key="11">
    <citation type="journal article" date="2002" name="Proc. Natl. Acad. Sci. U.S.A.">
        <title>JLP: a scaffolding protein that tethers JNK/p38MAPK signaling modules and transcription factors.</title>
        <authorList>
            <person name="Lee C.M."/>
            <person name="Onesime D."/>
            <person name="Reddy C.D."/>
            <person name="Dhanasekaran N."/>
            <person name="Reddy E.P."/>
        </authorList>
    </citation>
    <scope>INTERACTION WITH SPAG9</scope>
</reference>
<reference key="12">
    <citation type="journal article" date="2006" name="Cell">
        <title>Induction of pluripotent stem cells from mouse embryonic and adult fibroblast cultures by defined factors.</title>
        <authorList>
            <person name="Takahashi K."/>
            <person name="Yamanaka S."/>
        </authorList>
    </citation>
    <scope>BIOTECHNOLOGY</scope>
</reference>
<reference key="13">
    <citation type="journal article" date="2008" name="Oncogene">
        <title>Pim kinase-dependent inhibition of c-Myc degradation.</title>
        <authorList>
            <person name="Zhang Y."/>
            <person name="Wang Z."/>
            <person name="Li X."/>
            <person name="Magnuson N.S."/>
        </authorList>
    </citation>
    <scope>PHOSPHORYLATION AT SER-344</scope>
    <scope>MUTAGENESIS OF SER-344</scope>
    <scope>INTERACTION WITH PIM2</scope>
</reference>
<reference key="14">
    <citation type="journal article" date="2012" name="EMBO J.">
        <title>Nuclear receptor binding protein 1 regulates intestinal progenitor cell homeostasis and tumour formation.</title>
        <authorList>
            <person name="Wilson C.H."/>
            <person name="Crombie C."/>
            <person name="van der Weyden L."/>
            <person name="Poulogiannis G."/>
            <person name="Rust A.G."/>
            <person name="Pardo M."/>
            <person name="Gracia T."/>
            <person name="Yu L."/>
            <person name="Choudhary J."/>
            <person name="Poulin G.B."/>
            <person name="McIntyre R.E."/>
            <person name="Winton D.J."/>
            <person name="March H.N."/>
            <person name="Arends M.J."/>
            <person name="Fraser A.G."/>
            <person name="Adams D.J."/>
        </authorList>
    </citation>
    <scope>TISSUE SPECIFICITY</scope>
</reference>
<reference key="15">
    <citation type="journal article" date="2012" name="J. Cell Sci.">
        <title>TRIM6 interacts with Myc and maintains the pluripotency of mouse embryonic stem cells.</title>
        <authorList>
            <person name="Sato T."/>
            <person name="Okumura F."/>
            <person name="Ariga T."/>
            <person name="Hatakeyama S."/>
        </authorList>
    </citation>
    <scope>MUTAGENESIS OF THR-73 AND SER-77</scope>
    <scope>INTERACTION WITH TRIM6</scope>
    <scope>UBIQUITINATION</scope>
</reference>
<reference key="16">
    <citation type="journal article" date="2013" name="Mol. Cell">
        <title>SIRT5-mediated lysine desuccinylation impacts diverse metabolic pathways.</title>
        <authorList>
            <person name="Park J."/>
            <person name="Chen Y."/>
            <person name="Tishkoff D.X."/>
            <person name="Peng C."/>
            <person name="Tan M."/>
            <person name="Dai L."/>
            <person name="Xie Z."/>
            <person name="Zhang Y."/>
            <person name="Zwaans B.M."/>
            <person name="Skinner M.E."/>
            <person name="Lombard D.B."/>
            <person name="Zhao Y."/>
        </authorList>
    </citation>
    <scope>ACETYLATION [LARGE SCALE ANALYSIS] AT LYS-164</scope>
    <scope>IDENTIFICATION BY MASS SPECTROMETRY [LARGE SCALE ANALYSIS]</scope>
    <source>
        <tissue>Embryonic fibroblast</tissue>
    </source>
</reference>
<reference key="17">
    <citation type="journal article" date="2019" name="Mol. Cell">
        <title>TAF5L and TAF6L Maintain Self-Renewal of Embryonic Stem Cells via the MYC Regulatory Network.</title>
        <authorList>
            <person name="Seruggia D."/>
            <person name="Oti M."/>
            <person name="Tripathi P."/>
            <person name="Canver M.C."/>
            <person name="LeBlanc L."/>
            <person name="Di Giammartino D.C."/>
            <person name="Bullen M.J."/>
            <person name="Nefzger C.M."/>
            <person name="Sun Y.B.Y."/>
            <person name="Farouni R."/>
            <person name="Polo J.M."/>
            <person name="Pinello L."/>
            <person name="Apostolou E."/>
            <person name="Kim J."/>
            <person name="Orkin S.H."/>
            <person name="Das P.P."/>
        </authorList>
    </citation>
    <scope>FUNCTION</scope>
</reference>